<evidence type="ECO:0000255" key="1">
    <source>
        <dbReference type="HAMAP-Rule" id="MF_00191"/>
    </source>
</evidence>
<gene>
    <name evidence="1" type="primary">ispH</name>
    <name type="ordered locus">Gura_1466</name>
</gene>
<reference key="1">
    <citation type="submission" date="2007-05" db="EMBL/GenBank/DDBJ databases">
        <title>Complete sequence of Geobacter uraniireducens Rf4.</title>
        <authorList>
            <consortium name="US DOE Joint Genome Institute"/>
            <person name="Copeland A."/>
            <person name="Lucas S."/>
            <person name="Lapidus A."/>
            <person name="Barry K."/>
            <person name="Detter J.C."/>
            <person name="Glavina del Rio T."/>
            <person name="Hammon N."/>
            <person name="Israni S."/>
            <person name="Dalin E."/>
            <person name="Tice H."/>
            <person name="Pitluck S."/>
            <person name="Chertkov O."/>
            <person name="Brettin T."/>
            <person name="Bruce D."/>
            <person name="Han C."/>
            <person name="Schmutz J."/>
            <person name="Larimer F."/>
            <person name="Land M."/>
            <person name="Hauser L."/>
            <person name="Kyrpides N."/>
            <person name="Mikhailova N."/>
            <person name="Shelobolina E."/>
            <person name="Aklujkar M."/>
            <person name="Lovley D."/>
            <person name="Richardson P."/>
        </authorList>
    </citation>
    <scope>NUCLEOTIDE SEQUENCE [LARGE SCALE GENOMIC DNA]</scope>
    <source>
        <strain>ATCC BAA-1134 / JCM 13001 / Rf4</strain>
    </source>
</reference>
<protein>
    <recommendedName>
        <fullName evidence="1">4-hydroxy-3-methylbut-2-enyl diphosphate reductase</fullName>
        <shortName evidence="1">HMBPP reductase</shortName>
        <ecNumber evidence="1">1.17.7.4</ecNumber>
    </recommendedName>
</protein>
<dbReference type="EC" id="1.17.7.4" evidence="1"/>
<dbReference type="EMBL" id="CP000698">
    <property type="protein sequence ID" value="ABQ25665.1"/>
    <property type="molecule type" value="Genomic_DNA"/>
</dbReference>
<dbReference type="RefSeq" id="WP_011938381.1">
    <property type="nucleotide sequence ID" value="NC_009483.1"/>
</dbReference>
<dbReference type="SMR" id="A5GE10"/>
<dbReference type="STRING" id="351605.Gura_1466"/>
<dbReference type="KEGG" id="gur:Gura_1466"/>
<dbReference type="HOGENOM" id="CLU_027486_0_1_7"/>
<dbReference type="OrthoDB" id="9804068at2"/>
<dbReference type="UniPathway" id="UPA00056">
    <property type="reaction ID" value="UER00097"/>
</dbReference>
<dbReference type="UniPathway" id="UPA00059">
    <property type="reaction ID" value="UER00105"/>
</dbReference>
<dbReference type="Proteomes" id="UP000006695">
    <property type="component" value="Chromosome"/>
</dbReference>
<dbReference type="GO" id="GO:0051539">
    <property type="term" value="F:4 iron, 4 sulfur cluster binding"/>
    <property type="evidence" value="ECO:0007669"/>
    <property type="project" value="UniProtKB-UniRule"/>
</dbReference>
<dbReference type="GO" id="GO:0051745">
    <property type="term" value="F:4-hydroxy-3-methylbut-2-enyl diphosphate reductase activity"/>
    <property type="evidence" value="ECO:0007669"/>
    <property type="project" value="UniProtKB-UniRule"/>
</dbReference>
<dbReference type="GO" id="GO:0046872">
    <property type="term" value="F:metal ion binding"/>
    <property type="evidence" value="ECO:0007669"/>
    <property type="project" value="UniProtKB-KW"/>
</dbReference>
<dbReference type="GO" id="GO:0050992">
    <property type="term" value="P:dimethylallyl diphosphate biosynthetic process"/>
    <property type="evidence" value="ECO:0007669"/>
    <property type="project" value="UniProtKB-UniRule"/>
</dbReference>
<dbReference type="GO" id="GO:0019288">
    <property type="term" value="P:isopentenyl diphosphate biosynthetic process, methylerythritol 4-phosphate pathway"/>
    <property type="evidence" value="ECO:0007669"/>
    <property type="project" value="UniProtKB-UniRule"/>
</dbReference>
<dbReference type="GO" id="GO:0016114">
    <property type="term" value="P:terpenoid biosynthetic process"/>
    <property type="evidence" value="ECO:0007669"/>
    <property type="project" value="UniProtKB-UniRule"/>
</dbReference>
<dbReference type="CDD" id="cd13944">
    <property type="entry name" value="lytB_ispH"/>
    <property type="match status" value="1"/>
</dbReference>
<dbReference type="Gene3D" id="3.40.50.11270">
    <property type="match status" value="1"/>
</dbReference>
<dbReference type="Gene3D" id="3.40.1010.20">
    <property type="entry name" value="4-hydroxy-3-methylbut-2-enyl diphosphate reductase, catalytic domain"/>
    <property type="match status" value="2"/>
</dbReference>
<dbReference type="HAMAP" id="MF_00191">
    <property type="entry name" value="IspH"/>
    <property type="match status" value="1"/>
</dbReference>
<dbReference type="InterPro" id="IPR003451">
    <property type="entry name" value="LytB/IspH"/>
</dbReference>
<dbReference type="NCBIfam" id="TIGR00216">
    <property type="entry name" value="ispH_lytB"/>
    <property type="match status" value="1"/>
</dbReference>
<dbReference type="NCBIfam" id="NF002187">
    <property type="entry name" value="PRK01045.1-1"/>
    <property type="match status" value="1"/>
</dbReference>
<dbReference type="PANTHER" id="PTHR30426">
    <property type="entry name" value="4-HYDROXY-3-METHYLBUT-2-ENYL DIPHOSPHATE REDUCTASE"/>
    <property type="match status" value="1"/>
</dbReference>
<dbReference type="PANTHER" id="PTHR30426:SF0">
    <property type="entry name" value="4-HYDROXY-3-METHYLBUT-2-ENYL DIPHOSPHATE REDUCTASE"/>
    <property type="match status" value="1"/>
</dbReference>
<dbReference type="Pfam" id="PF02401">
    <property type="entry name" value="LYTB"/>
    <property type="match status" value="1"/>
</dbReference>
<comment type="function">
    <text evidence="1">Catalyzes the conversion of 1-hydroxy-2-methyl-2-(E)-butenyl 4-diphosphate (HMBPP) into a mixture of isopentenyl diphosphate (IPP) and dimethylallyl diphosphate (DMAPP). Acts in the terminal step of the DOXP/MEP pathway for isoprenoid precursor biosynthesis.</text>
</comment>
<comment type="catalytic activity">
    <reaction evidence="1">
        <text>isopentenyl diphosphate + 2 oxidized [2Fe-2S]-[ferredoxin] + H2O = (2E)-4-hydroxy-3-methylbut-2-enyl diphosphate + 2 reduced [2Fe-2S]-[ferredoxin] + 2 H(+)</text>
        <dbReference type="Rhea" id="RHEA:24488"/>
        <dbReference type="Rhea" id="RHEA-COMP:10000"/>
        <dbReference type="Rhea" id="RHEA-COMP:10001"/>
        <dbReference type="ChEBI" id="CHEBI:15377"/>
        <dbReference type="ChEBI" id="CHEBI:15378"/>
        <dbReference type="ChEBI" id="CHEBI:33737"/>
        <dbReference type="ChEBI" id="CHEBI:33738"/>
        <dbReference type="ChEBI" id="CHEBI:128753"/>
        <dbReference type="ChEBI" id="CHEBI:128769"/>
        <dbReference type="EC" id="1.17.7.4"/>
    </reaction>
</comment>
<comment type="catalytic activity">
    <reaction evidence="1">
        <text>dimethylallyl diphosphate + 2 oxidized [2Fe-2S]-[ferredoxin] + H2O = (2E)-4-hydroxy-3-methylbut-2-enyl diphosphate + 2 reduced [2Fe-2S]-[ferredoxin] + 2 H(+)</text>
        <dbReference type="Rhea" id="RHEA:24825"/>
        <dbReference type="Rhea" id="RHEA-COMP:10000"/>
        <dbReference type="Rhea" id="RHEA-COMP:10001"/>
        <dbReference type="ChEBI" id="CHEBI:15377"/>
        <dbReference type="ChEBI" id="CHEBI:15378"/>
        <dbReference type="ChEBI" id="CHEBI:33737"/>
        <dbReference type="ChEBI" id="CHEBI:33738"/>
        <dbReference type="ChEBI" id="CHEBI:57623"/>
        <dbReference type="ChEBI" id="CHEBI:128753"/>
        <dbReference type="EC" id="1.17.7.4"/>
    </reaction>
</comment>
<comment type="cofactor">
    <cofactor evidence="1">
        <name>[4Fe-4S] cluster</name>
        <dbReference type="ChEBI" id="CHEBI:49883"/>
    </cofactor>
    <text evidence="1">Binds 1 [4Fe-4S] cluster per subunit.</text>
</comment>
<comment type="pathway">
    <text evidence="1">Isoprenoid biosynthesis; dimethylallyl diphosphate biosynthesis; dimethylallyl diphosphate from (2E)-4-hydroxy-3-methylbutenyl diphosphate: step 1/1.</text>
</comment>
<comment type="pathway">
    <text evidence="1">Isoprenoid biosynthesis; isopentenyl diphosphate biosynthesis via DXP pathway; isopentenyl diphosphate from 1-deoxy-D-xylulose 5-phosphate: step 6/6.</text>
</comment>
<comment type="similarity">
    <text evidence="1">Belongs to the IspH family.</text>
</comment>
<accession>A5GE10</accession>
<feature type="chain" id="PRO_1000077517" description="4-hydroxy-3-methylbut-2-enyl diphosphate reductase">
    <location>
        <begin position="1"/>
        <end position="282"/>
    </location>
</feature>
<feature type="active site" description="Proton donor" evidence="1">
    <location>
        <position position="124"/>
    </location>
</feature>
<feature type="binding site" evidence="1">
    <location>
        <position position="12"/>
    </location>
    <ligand>
        <name>[4Fe-4S] cluster</name>
        <dbReference type="ChEBI" id="CHEBI:49883"/>
    </ligand>
</feature>
<feature type="binding site" evidence="1">
    <location>
        <position position="40"/>
    </location>
    <ligand>
        <name>(2E)-4-hydroxy-3-methylbut-2-enyl diphosphate</name>
        <dbReference type="ChEBI" id="CHEBI:128753"/>
    </ligand>
</feature>
<feature type="binding site" evidence="1">
    <location>
        <position position="40"/>
    </location>
    <ligand>
        <name>dimethylallyl diphosphate</name>
        <dbReference type="ChEBI" id="CHEBI:57623"/>
    </ligand>
</feature>
<feature type="binding site" evidence="1">
    <location>
        <position position="40"/>
    </location>
    <ligand>
        <name>isopentenyl diphosphate</name>
        <dbReference type="ChEBI" id="CHEBI:128769"/>
    </ligand>
</feature>
<feature type="binding site" evidence="1">
    <location>
        <position position="72"/>
    </location>
    <ligand>
        <name>(2E)-4-hydroxy-3-methylbut-2-enyl diphosphate</name>
        <dbReference type="ChEBI" id="CHEBI:128753"/>
    </ligand>
</feature>
<feature type="binding site" evidence="1">
    <location>
        <position position="72"/>
    </location>
    <ligand>
        <name>dimethylallyl diphosphate</name>
        <dbReference type="ChEBI" id="CHEBI:57623"/>
    </ligand>
</feature>
<feature type="binding site" evidence="1">
    <location>
        <position position="72"/>
    </location>
    <ligand>
        <name>isopentenyl diphosphate</name>
        <dbReference type="ChEBI" id="CHEBI:128769"/>
    </ligand>
</feature>
<feature type="binding site" evidence="1">
    <location>
        <position position="94"/>
    </location>
    <ligand>
        <name>[4Fe-4S] cluster</name>
        <dbReference type="ChEBI" id="CHEBI:49883"/>
    </ligand>
</feature>
<feature type="binding site" evidence="1">
    <location>
        <position position="122"/>
    </location>
    <ligand>
        <name>(2E)-4-hydroxy-3-methylbut-2-enyl diphosphate</name>
        <dbReference type="ChEBI" id="CHEBI:128753"/>
    </ligand>
</feature>
<feature type="binding site" evidence="1">
    <location>
        <position position="122"/>
    </location>
    <ligand>
        <name>dimethylallyl diphosphate</name>
        <dbReference type="ChEBI" id="CHEBI:57623"/>
    </ligand>
</feature>
<feature type="binding site" evidence="1">
    <location>
        <position position="122"/>
    </location>
    <ligand>
        <name>isopentenyl diphosphate</name>
        <dbReference type="ChEBI" id="CHEBI:128769"/>
    </ligand>
</feature>
<feature type="binding site" evidence="1">
    <location>
        <position position="160"/>
    </location>
    <ligand>
        <name>(2E)-4-hydroxy-3-methylbut-2-enyl diphosphate</name>
        <dbReference type="ChEBI" id="CHEBI:128753"/>
    </ligand>
</feature>
<feature type="binding site" evidence="1">
    <location>
        <position position="188"/>
    </location>
    <ligand>
        <name>[4Fe-4S] cluster</name>
        <dbReference type="ChEBI" id="CHEBI:49883"/>
    </ligand>
</feature>
<feature type="binding site" evidence="1">
    <location>
        <position position="216"/>
    </location>
    <ligand>
        <name>(2E)-4-hydroxy-3-methylbut-2-enyl diphosphate</name>
        <dbReference type="ChEBI" id="CHEBI:128753"/>
    </ligand>
</feature>
<feature type="binding site" evidence="1">
    <location>
        <position position="216"/>
    </location>
    <ligand>
        <name>dimethylallyl diphosphate</name>
        <dbReference type="ChEBI" id="CHEBI:57623"/>
    </ligand>
</feature>
<feature type="binding site" evidence="1">
    <location>
        <position position="216"/>
    </location>
    <ligand>
        <name>isopentenyl diphosphate</name>
        <dbReference type="ChEBI" id="CHEBI:128769"/>
    </ligand>
</feature>
<feature type="binding site" evidence="1">
    <location>
        <position position="218"/>
    </location>
    <ligand>
        <name>(2E)-4-hydroxy-3-methylbut-2-enyl diphosphate</name>
        <dbReference type="ChEBI" id="CHEBI:128753"/>
    </ligand>
</feature>
<feature type="binding site" evidence="1">
    <location>
        <position position="218"/>
    </location>
    <ligand>
        <name>dimethylallyl diphosphate</name>
        <dbReference type="ChEBI" id="CHEBI:57623"/>
    </ligand>
</feature>
<feature type="binding site" evidence="1">
    <location>
        <position position="218"/>
    </location>
    <ligand>
        <name>isopentenyl diphosphate</name>
        <dbReference type="ChEBI" id="CHEBI:128769"/>
    </ligand>
</feature>
<feature type="binding site" evidence="1">
    <location>
        <position position="260"/>
    </location>
    <ligand>
        <name>(2E)-4-hydroxy-3-methylbut-2-enyl diphosphate</name>
        <dbReference type="ChEBI" id="CHEBI:128753"/>
    </ligand>
</feature>
<feature type="binding site" evidence="1">
    <location>
        <position position="260"/>
    </location>
    <ligand>
        <name>dimethylallyl diphosphate</name>
        <dbReference type="ChEBI" id="CHEBI:57623"/>
    </ligand>
</feature>
<feature type="binding site" evidence="1">
    <location>
        <position position="260"/>
    </location>
    <ligand>
        <name>isopentenyl diphosphate</name>
        <dbReference type="ChEBI" id="CHEBI:128769"/>
    </ligand>
</feature>
<sequence>MKVILAKQAGFCFGVKRATQMAFEAADKGGKTYTLGPIIHSPQVVQKLEEMGVKALKDISGMDDGTIIIRSHGVASGELEEAVRKELEIVDATCPFVKKAQEHVESLSQAGYDVVVVGDADHPEVQGIVSYASGKVYVVGSGDEAAKLPKMAKIGVVAQTTQSFENLKNVVDACLTKGGEIRVFHTICDATAVRQEEAKELASQVDCMIVIGGYNSANTKRLAEVCTELQPRTYHIEMAQQLNPRWFEGVGKVGVTAGASTPKWLIDEVLEQIEKINKDKNH</sequence>
<keyword id="KW-0004">4Fe-4S</keyword>
<keyword id="KW-0408">Iron</keyword>
<keyword id="KW-0411">Iron-sulfur</keyword>
<keyword id="KW-0414">Isoprene biosynthesis</keyword>
<keyword id="KW-0479">Metal-binding</keyword>
<keyword id="KW-0560">Oxidoreductase</keyword>
<keyword id="KW-1185">Reference proteome</keyword>
<proteinExistence type="inferred from homology"/>
<organism>
    <name type="scientific">Geotalea uraniireducens (strain Rf4)</name>
    <name type="common">Geobacter uraniireducens</name>
    <dbReference type="NCBI Taxonomy" id="351605"/>
    <lineage>
        <taxon>Bacteria</taxon>
        <taxon>Pseudomonadati</taxon>
        <taxon>Thermodesulfobacteriota</taxon>
        <taxon>Desulfuromonadia</taxon>
        <taxon>Geobacterales</taxon>
        <taxon>Geobacteraceae</taxon>
        <taxon>Geotalea</taxon>
    </lineage>
</organism>
<name>ISPH_GEOUR</name>